<dbReference type="EMBL" id="CP001139">
    <property type="protein sequence ID" value="ACH65386.1"/>
    <property type="molecule type" value="Genomic_DNA"/>
</dbReference>
<dbReference type="RefSeq" id="WP_005420564.1">
    <property type="nucleotide sequence ID" value="NC_011184.1"/>
</dbReference>
<dbReference type="SMR" id="B5F9X9"/>
<dbReference type="GeneID" id="54164661"/>
<dbReference type="KEGG" id="vfm:VFMJ11_2099"/>
<dbReference type="HOGENOM" id="CLU_136774_0_0_6"/>
<dbReference type="Proteomes" id="UP000001857">
    <property type="component" value="Chromosome I"/>
</dbReference>
<dbReference type="HAMAP" id="MF_01519">
    <property type="entry name" value="UPF0325"/>
    <property type="match status" value="1"/>
</dbReference>
<dbReference type="InterPro" id="IPR020911">
    <property type="entry name" value="UPF0325"/>
</dbReference>
<dbReference type="NCBIfam" id="NF010213">
    <property type="entry name" value="PRK13677.1"/>
    <property type="match status" value="1"/>
</dbReference>
<dbReference type="Pfam" id="PF11944">
    <property type="entry name" value="DUF3461"/>
    <property type="match status" value="1"/>
</dbReference>
<feature type="chain" id="PRO_1000198444" description="UPF0325 protein VFMJ11_2099">
    <location>
        <begin position="1"/>
        <end position="126"/>
    </location>
</feature>
<reference key="1">
    <citation type="submission" date="2008-08" db="EMBL/GenBank/DDBJ databases">
        <title>Complete sequence of Vibrio fischeri strain MJ11.</title>
        <authorList>
            <person name="Mandel M.J."/>
            <person name="Stabb E.V."/>
            <person name="Ruby E.G."/>
            <person name="Ferriera S."/>
            <person name="Johnson J."/>
            <person name="Kravitz S."/>
            <person name="Beeson K."/>
            <person name="Sutton G."/>
            <person name="Rogers Y.-H."/>
            <person name="Friedman R."/>
            <person name="Frazier M."/>
            <person name="Venter J.C."/>
        </authorList>
    </citation>
    <scope>NUCLEOTIDE SEQUENCE [LARGE SCALE GENOMIC DNA]</scope>
    <source>
        <strain>MJ11</strain>
    </source>
</reference>
<evidence type="ECO:0000255" key="1">
    <source>
        <dbReference type="HAMAP-Rule" id="MF_01519"/>
    </source>
</evidence>
<protein>
    <recommendedName>
        <fullName evidence="1">UPF0325 protein VFMJ11_2099</fullName>
    </recommendedName>
</protein>
<proteinExistence type="inferred from homology"/>
<organism>
    <name type="scientific">Aliivibrio fischeri (strain MJ11)</name>
    <name type="common">Vibrio fischeri</name>
    <dbReference type="NCBI Taxonomy" id="388396"/>
    <lineage>
        <taxon>Bacteria</taxon>
        <taxon>Pseudomonadati</taxon>
        <taxon>Pseudomonadota</taxon>
        <taxon>Gammaproteobacteria</taxon>
        <taxon>Vibrionales</taxon>
        <taxon>Vibrionaceae</taxon>
        <taxon>Aliivibrio</taxon>
    </lineage>
</organism>
<gene>
    <name type="ordered locus">VFMJ11_2099</name>
</gene>
<name>Y2099_ALIFM</name>
<accession>B5F9X9</accession>
<sequence length="126" mass="14875">MYPHLVSLGISEPEKIERYSLRQEAHKDILKIYFSKQKGELFAKSVKFKYPRQVKNVLVDSGSHRYKETTEINRNLTLIIDELNKITRPEKETPTDVKKKILKDLRHLEKVVASKIEEIEKDLEKL</sequence>
<comment type="similarity">
    <text evidence="1">Belongs to the UPF0325 family.</text>
</comment>